<dbReference type="EMBL" id="AC152939">
    <property type="status" value="NOT_ANNOTATED_CDS"/>
    <property type="molecule type" value="Genomic_DNA"/>
</dbReference>
<dbReference type="EMBL" id="CO436178">
    <property type="status" value="NOT_ANNOTATED_CDS"/>
    <property type="molecule type" value="mRNA"/>
</dbReference>
<dbReference type="CCDS" id="CCDS52229.1"/>
<dbReference type="RefSeq" id="NP_001029287.1">
    <property type="nucleotide sequence ID" value="NM_001034115.1"/>
</dbReference>
<dbReference type="RefSeq" id="XP_006540927.1">
    <property type="nucleotide sequence ID" value="XM_006540864.5"/>
</dbReference>
<dbReference type="RefSeq" id="XP_030098435.1">
    <property type="nucleotide sequence ID" value="XM_030242575.2"/>
</dbReference>
<dbReference type="SMR" id="D3YZU1"/>
<dbReference type="BioGRID" id="232591">
    <property type="interactions" value="18"/>
</dbReference>
<dbReference type="CORUM" id="D3YZU1"/>
<dbReference type="FunCoup" id="D3YZU1">
    <property type="interactions" value="529"/>
</dbReference>
<dbReference type="IntAct" id="D3YZU1">
    <property type="interactions" value="16"/>
</dbReference>
<dbReference type="MINT" id="D3YZU1"/>
<dbReference type="STRING" id="10090.ENSMUSP00000103571"/>
<dbReference type="GlyGen" id="D3YZU1">
    <property type="glycosylation" value="22 sites, 1 O-linked glycan (13 sites)"/>
</dbReference>
<dbReference type="iPTMnet" id="D3YZU1"/>
<dbReference type="PhosphoSitePlus" id="D3YZU1"/>
<dbReference type="SwissPalm" id="D3YZU1"/>
<dbReference type="PaxDb" id="10090-ENSMUSP00000103571"/>
<dbReference type="PeptideAtlas" id="D3YZU1"/>
<dbReference type="ProteomicsDB" id="257149"/>
<dbReference type="ABCD" id="D3YZU1">
    <property type="antibodies" value="3 sequenced antibodies"/>
</dbReference>
<dbReference type="Antibodypedia" id="18886">
    <property type="antibodies" value="199 antibodies from 27 providers"/>
</dbReference>
<dbReference type="Ensembl" id="ENSMUST00000107938.8">
    <property type="protein sequence ID" value="ENSMUSP00000103571.2"/>
    <property type="gene ID" value="ENSMUSG00000038738.16"/>
</dbReference>
<dbReference type="GeneID" id="243961"/>
<dbReference type="KEGG" id="mmu:243961"/>
<dbReference type="UCSC" id="uc012fjo.1">
    <property type="organism name" value="mouse"/>
</dbReference>
<dbReference type="AGR" id="MGI:3613677"/>
<dbReference type="CTD" id="50944"/>
<dbReference type="MGI" id="MGI:3613677">
    <property type="gene designation" value="Shank1"/>
</dbReference>
<dbReference type="VEuPathDB" id="HostDB:ENSMUSG00000038738"/>
<dbReference type="eggNOG" id="KOG0504">
    <property type="taxonomic scope" value="Eukaryota"/>
</dbReference>
<dbReference type="eggNOG" id="KOG4375">
    <property type="taxonomic scope" value="Eukaryota"/>
</dbReference>
<dbReference type="GeneTree" id="ENSGT00940000153561"/>
<dbReference type="InParanoid" id="D3YZU1"/>
<dbReference type="OMA" id="VRFMENC"/>
<dbReference type="OrthoDB" id="445896at2759"/>
<dbReference type="PhylomeDB" id="D3YZU1"/>
<dbReference type="TreeFam" id="TF324593"/>
<dbReference type="Reactome" id="R-MMU-6794361">
    <property type="pathway name" value="Neurexins and neuroligins"/>
</dbReference>
<dbReference type="BioGRID-ORCS" id="243961">
    <property type="hits" value="3 hits in 77 CRISPR screens"/>
</dbReference>
<dbReference type="CD-CODE" id="CE726F99">
    <property type="entry name" value="Postsynaptic density"/>
</dbReference>
<dbReference type="PRO" id="PR:D3YZU1"/>
<dbReference type="Proteomes" id="UP000000589">
    <property type="component" value="Chromosome 7"/>
</dbReference>
<dbReference type="RNAct" id="D3YZU1">
    <property type="molecule type" value="protein"/>
</dbReference>
<dbReference type="Bgee" id="ENSMUSG00000038738">
    <property type="expression patterns" value="Expressed in prefrontal cortex and 140 other cell types or tissues"/>
</dbReference>
<dbReference type="ExpressionAtlas" id="D3YZU1">
    <property type="expression patterns" value="baseline and differential"/>
</dbReference>
<dbReference type="GO" id="GO:0005737">
    <property type="term" value="C:cytoplasm"/>
    <property type="evidence" value="ECO:0007669"/>
    <property type="project" value="UniProtKB-SubCell"/>
</dbReference>
<dbReference type="GO" id="GO:0030425">
    <property type="term" value="C:dendrite"/>
    <property type="evidence" value="ECO:0000314"/>
    <property type="project" value="BHF-UCL"/>
</dbReference>
<dbReference type="GO" id="GO:0043197">
    <property type="term" value="C:dendritic spine"/>
    <property type="evidence" value="ECO:0000314"/>
    <property type="project" value="BHF-UCL"/>
</dbReference>
<dbReference type="GO" id="GO:0060076">
    <property type="term" value="C:excitatory synapse"/>
    <property type="evidence" value="ECO:0000314"/>
    <property type="project" value="BHF-UCL"/>
</dbReference>
<dbReference type="GO" id="GO:0098978">
    <property type="term" value="C:glutamatergic synapse"/>
    <property type="evidence" value="ECO:0000314"/>
    <property type="project" value="SynGO"/>
</dbReference>
<dbReference type="GO" id="GO:0043005">
    <property type="term" value="C:neuron projection"/>
    <property type="evidence" value="ECO:0000314"/>
    <property type="project" value="BHF-UCL"/>
</dbReference>
<dbReference type="GO" id="GO:0005886">
    <property type="term" value="C:plasma membrane"/>
    <property type="evidence" value="ECO:0000314"/>
    <property type="project" value="BHF-UCL"/>
</dbReference>
<dbReference type="GO" id="GO:0014069">
    <property type="term" value="C:postsynaptic density"/>
    <property type="evidence" value="ECO:0000314"/>
    <property type="project" value="BHF-UCL"/>
</dbReference>
<dbReference type="GO" id="GO:0045211">
    <property type="term" value="C:postsynaptic membrane"/>
    <property type="evidence" value="ECO:0000314"/>
    <property type="project" value="MGI"/>
</dbReference>
<dbReference type="GO" id="GO:0098685">
    <property type="term" value="C:Schaffer collateral - CA1 synapse"/>
    <property type="evidence" value="ECO:0000314"/>
    <property type="project" value="SynGO"/>
</dbReference>
<dbReference type="GO" id="GO:0071532">
    <property type="term" value="F:ankyrin repeat binding"/>
    <property type="evidence" value="ECO:0000250"/>
    <property type="project" value="BHF-UCL"/>
</dbReference>
<dbReference type="GO" id="GO:0042802">
    <property type="term" value="F:identical protein binding"/>
    <property type="evidence" value="ECO:0000250"/>
    <property type="project" value="BHF-UCL"/>
</dbReference>
<dbReference type="GO" id="GO:0035255">
    <property type="term" value="F:ionotropic glutamate receptor binding"/>
    <property type="evidence" value="ECO:0000353"/>
    <property type="project" value="BHF-UCL"/>
</dbReference>
<dbReference type="GO" id="GO:0044877">
    <property type="term" value="F:protein-containing complex binding"/>
    <property type="evidence" value="ECO:0000250"/>
    <property type="project" value="BHF-UCL"/>
</dbReference>
<dbReference type="GO" id="GO:0097110">
    <property type="term" value="F:scaffold protein binding"/>
    <property type="evidence" value="ECO:0000250"/>
    <property type="project" value="BHF-UCL"/>
</dbReference>
<dbReference type="GO" id="GO:0017124">
    <property type="term" value="F:SH3 domain binding"/>
    <property type="evidence" value="ECO:0000250"/>
    <property type="project" value="BHF-UCL"/>
</dbReference>
<dbReference type="GO" id="GO:0031877">
    <property type="term" value="F:somatostatin receptor binding"/>
    <property type="evidence" value="ECO:0000250"/>
    <property type="project" value="BHF-UCL"/>
</dbReference>
<dbReference type="GO" id="GO:0098919">
    <property type="term" value="F:structural constituent of postsynaptic density"/>
    <property type="evidence" value="ECO:0000314"/>
    <property type="project" value="SynGO"/>
</dbReference>
<dbReference type="GO" id="GO:0030160">
    <property type="term" value="F:synaptic receptor adaptor activity"/>
    <property type="evidence" value="ECO:0000315"/>
    <property type="project" value="BHF-UCL"/>
</dbReference>
<dbReference type="GO" id="GO:0030534">
    <property type="term" value="P:adult behavior"/>
    <property type="evidence" value="ECO:0007669"/>
    <property type="project" value="Ensembl"/>
</dbReference>
<dbReference type="GO" id="GO:0098990">
    <property type="term" value="P:AMPA selective glutamate receptor signaling pathway"/>
    <property type="evidence" value="ECO:0000315"/>
    <property type="project" value="BHF-UCL"/>
</dbReference>
<dbReference type="GO" id="GO:0008306">
    <property type="term" value="P:associative learning"/>
    <property type="evidence" value="ECO:0000315"/>
    <property type="project" value="BHF-UCL"/>
</dbReference>
<dbReference type="GO" id="GO:0060997">
    <property type="term" value="P:dendritic spine morphogenesis"/>
    <property type="evidence" value="ECO:0000315"/>
    <property type="project" value="BHF-UCL"/>
</dbReference>
<dbReference type="GO" id="GO:0050894">
    <property type="term" value="P:determination of affect"/>
    <property type="evidence" value="ECO:0007669"/>
    <property type="project" value="Ensembl"/>
</dbReference>
<dbReference type="GO" id="GO:0046959">
    <property type="term" value="P:habituation"/>
    <property type="evidence" value="ECO:0000315"/>
    <property type="project" value="CACAO"/>
</dbReference>
<dbReference type="GO" id="GO:0007616">
    <property type="term" value="P:long-term memory"/>
    <property type="evidence" value="ECO:0000315"/>
    <property type="project" value="BHF-UCL"/>
</dbReference>
<dbReference type="GO" id="GO:0050804">
    <property type="term" value="P:modulation of chemical synaptic transmission"/>
    <property type="evidence" value="ECO:0000314"/>
    <property type="project" value="SynGO"/>
</dbReference>
<dbReference type="GO" id="GO:0032232">
    <property type="term" value="P:negative regulation of actin filament bundle assembly"/>
    <property type="evidence" value="ECO:0000314"/>
    <property type="project" value="MGI"/>
</dbReference>
<dbReference type="GO" id="GO:0050885">
    <property type="term" value="P:neuromuscular process controlling balance"/>
    <property type="evidence" value="ECO:0000315"/>
    <property type="project" value="BHF-UCL"/>
</dbReference>
<dbReference type="GO" id="GO:0042048">
    <property type="term" value="P:olfactory behavior"/>
    <property type="evidence" value="ECO:0000315"/>
    <property type="project" value="CACAO"/>
</dbReference>
<dbReference type="GO" id="GO:0060999">
    <property type="term" value="P:positive regulation of dendritic spine development"/>
    <property type="evidence" value="ECO:0000250"/>
    <property type="project" value="BHF-UCL"/>
</dbReference>
<dbReference type="GO" id="GO:2000463">
    <property type="term" value="P:positive regulation of excitatory postsynaptic potential"/>
    <property type="evidence" value="ECO:0000315"/>
    <property type="project" value="BHF-UCL"/>
</dbReference>
<dbReference type="GO" id="GO:0035418">
    <property type="term" value="P:protein localization to synapse"/>
    <property type="evidence" value="ECO:0000315"/>
    <property type="project" value="BHF-UCL"/>
</dbReference>
<dbReference type="GO" id="GO:0065003">
    <property type="term" value="P:protein-containing complex assembly"/>
    <property type="evidence" value="ECO:0000250"/>
    <property type="project" value="BHF-UCL"/>
</dbReference>
<dbReference type="GO" id="GO:0060013">
    <property type="term" value="P:righting reflex"/>
    <property type="evidence" value="ECO:0000315"/>
    <property type="project" value="CACAO"/>
</dbReference>
<dbReference type="GO" id="GO:0035176">
    <property type="term" value="P:social behavior"/>
    <property type="evidence" value="ECO:0000315"/>
    <property type="project" value="BHF-UCL"/>
</dbReference>
<dbReference type="GO" id="GO:0060074">
    <property type="term" value="P:synapse maturation"/>
    <property type="evidence" value="ECO:0000250"/>
    <property type="project" value="BHF-UCL"/>
</dbReference>
<dbReference type="GO" id="GO:0071625">
    <property type="term" value="P:vocalization behavior"/>
    <property type="evidence" value="ECO:0000315"/>
    <property type="project" value="CACAO"/>
</dbReference>
<dbReference type="CDD" id="cd17175">
    <property type="entry name" value="FERM_F0_SHANK1"/>
    <property type="match status" value="1"/>
</dbReference>
<dbReference type="CDD" id="cd06746">
    <property type="entry name" value="PDZ_SHANK1_3-like"/>
    <property type="match status" value="1"/>
</dbReference>
<dbReference type="CDD" id="cd09506">
    <property type="entry name" value="SAM_Shank1_2_3"/>
    <property type="match status" value="1"/>
</dbReference>
<dbReference type="FunFam" id="1.25.40.20:FF:000063">
    <property type="entry name" value="SH3 and multiple ankyrin repeat domains protein 1"/>
    <property type="match status" value="1"/>
</dbReference>
<dbReference type="FunFam" id="3.10.20.90:FF:000029">
    <property type="entry name" value="SH3 and multiple ankyrin repeat domains protein 1"/>
    <property type="match status" value="1"/>
</dbReference>
<dbReference type="FunFam" id="1.10.150.50:FF:000006">
    <property type="entry name" value="SH3 and multiple ankyrin repeat domains protein 2"/>
    <property type="match status" value="1"/>
</dbReference>
<dbReference type="FunFam" id="2.30.30.40:FF:000025">
    <property type="entry name" value="SH3 and multiple ankyrin repeat domains protein 2"/>
    <property type="match status" value="1"/>
</dbReference>
<dbReference type="FunFam" id="2.30.42.10:FF:000018">
    <property type="entry name" value="SH3 and multiple ankyrin repeat domains protein 2"/>
    <property type="match status" value="1"/>
</dbReference>
<dbReference type="Gene3D" id="2.30.42.10">
    <property type="match status" value="1"/>
</dbReference>
<dbReference type="Gene3D" id="1.25.40.20">
    <property type="entry name" value="Ankyrin repeat-containing domain"/>
    <property type="match status" value="1"/>
</dbReference>
<dbReference type="Gene3D" id="3.10.20.90">
    <property type="entry name" value="Phosphatidylinositol 3-kinase Catalytic Subunit, Chain A, domain 1"/>
    <property type="match status" value="1"/>
</dbReference>
<dbReference type="Gene3D" id="2.30.30.40">
    <property type="entry name" value="SH3 Domains"/>
    <property type="match status" value="1"/>
</dbReference>
<dbReference type="Gene3D" id="1.10.150.50">
    <property type="entry name" value="Transcription Factor, Ets-1"/>
    <property type="match status" value="1"/>
</dbReference>
<dbReference type="InterPro" id="IPR002110">
    <property type="entry name" value="Ankyrin_rpt"/>
</dbReference>
<dbReference type="InterPro" id="IPR036770">
    <property type="entry name" value="Ankyrin_rpt-contain_sf"/>
</dbReference>
<dbReference type="InterPro" id="IPR001478">
    <property type="entry name" value="PDZ"/>
</dbReference>
<dbReference type="InterPro" id="IPR041489">
    <property type="entry name" value="PDZ_6"/>
</dbReference>
<dbReference type="InterPro" id="IPR036034">
    <property type="entry name" value="PDZ_sf"/>
</dbReference>
<dbReference type="InterPro" id="IPR001660">
    <property type="entry name" value="SAM"/>
</dbReference>
<dbReference type="InterPro" id="IPR013761">
    <property type="entry name" value="SAM/pointed_sf"/>
</dbReference>
<dbReference type="InterPro" id="IPR036028">
    <property type="entry name" value="SH3-like_dom_sf"/>
</dbReference>
<dbReference type="InterPro" id="IPR001452">
    <property type="entry name" value="SH3_domain"/>
</dbReference>
<dbReference type="InterPro" id="IPR051569">
    <property type="entry name" value="SHANK"/>
</dbReference>
<dbReference type="PANTHER" id="PTHR24135">
    <property type="entry name" value="SH3 AND MULTIPLE ANKYRIN REPEAT DOMAINS PROTEIN"/>
    <property type="match status" value="1"/>
</dbReference>
<dbReference type="PANTHER" id="PTHR24135:SF3">
    <property type="entry name" value="SH3 AND MULTIPLE ANKYRIN REPEAT DOMAINS PROTEIN 1"/>
    <property type="match status" value="1"/>
</dbReference>
<dbReference type="Pfam" id="PF12796">
    <property type="entry name" value="Ank_2"/>
    <property type="match status" value="2"/>
</dbReference>
<dbReference type="Pfam" id="PF17820">
    <property type="entry name" value="PDZ_6"/>
    <property type="match status" value="1"/>
</dbReference>
<dbReference type="Pfam" id="PF00536">
    <property type="entry name" value="SAM_1"/>
    <property type="match status" value="1"/>
</dbReference>
<dbReference type="Pfam" id="PF07653">
    <property type="entry name" value="SH3_2"/>
    <property type="match status" value="1"/>
</dbReference>
<dbReference type="SMART" id="SM00248">
    <property type="entry name" value="ANK"/>
    <property type="match status" value="6"/>
</dbReference>
<dbReference type="SMART" id="SM00228">
    <property type="entry name" value="PDZ"/>
    <property type="match status" value="1"/>
</dbReference>
<dbReference type="SMART" id="SM00454">
    <property type="entry name" value="SAM"/>
    <property type="match status" value="1"/>
</dbReference>
<dbReference type="SMART" id="SM00326">
    <property type="entry name" value="SH3"/>
    <property type="match status" value="1"/>
</dbReference>
<dbReference type="SUPFAM" id="SSF48403">
    <property type="entry name" value="Ankyrin repeat"/>
    <property type="match status" value="1"/>
</dbReference>
<dbReference type="SUPFAM" id="SSF50156">
    <property type="entry name" value="PDZ domain-like"/>
    <property type="match status" value="1"/>
</dbReference>
<dbReference type="SUPFAM" id="SSF47769">
    <property type="entry name" value="SAM/Pointed domain"/>
    <property type="match status" value="1"/>
</dbReference>
<dbReference type="SUPFAM" id="SSF50044">
    <property type="entry name" value="SH3-domain"/>
    <property type="match status" value="1"/>
</dbReference>
<dbReference type="PROSITE" id="PS50297">
    <property type="entry name" value="ANK_REP_REGION"/>
    <property type="match status" value="1"/>
</dbReference>
<dbReference type="PROSITE" id="PS50088">
    <property type="entry name" value="ANK_REPEAT"/>
    <property type="match status" value="3"/>
</dbReference>
<dbReference type="PROSITE" id="PS50106">
    <property type="entry name" value="PDZ"/>
    <property type="match status" value="1"/>
</dbReference>
<dbReference type="PROSITE" id="PS50105">
    <property type="entry name" value="SAM_DOMAIN"/>
    <property type="match status" value="1"/>
</dbReference>
<dbReference type="PROSITE" id="PS50002">
    <property type="entry name" value="SH3"/>
    <property type="match status" value="1"/>
</dbReference>
<name>SHAN1_MOUSE</name>
<sequence length="2167" mass="226317">MTHSPATSEDEERHSASECPEGGSESDSSPDGPGRGPQGTRGRGSGAPGNLASTRGLQGRSMSVPDDAHFSMMVFRIGIPDLHQTKCLRFNPDATIWTAKQQVLCALSESLQDVLNYGLFQPATSGRDANFLEEERLLREYPQSFEKGVPYLEFRYKTRVYKQTNLDEKQLAKLHTKTGLKKFLEYVQLGTSDKVARLLDKGLDPNYHDSDSGETPLTLAAQTEGSVEVIRTLCLGGAHIDFRARDGMTALHKAACARHCLALTALLDLGGSPNYKDRRGLTPLFHTAMVGGDPRCCELLLYNRAQLGIADENGWQEIHQACQRGHSQHLEHLLFYGAEPGAQNASGNTALHICALYNKETCARILLYRGANKDVKNNNGQTPFQVAVIAGNFELGELIRNHREQDVVPFQESPKYAARRRGPPGAGLTVPPALLRANSDTSMALPDWMVFSAPGASSSGTPGPTSGSQGQSQPSAPSTKLSSGTLRSASSPRGARARSPSRGRHPEDAKRQPRGRPSSSGTPRDGPAGGTGGSGGPGGSLGSRGRRRKLYSAVPGRSFMAVKSYQAQGEGEISLSKGEKIKVLSIGEGGFWEGQVKGRVGWFPSDCLEEVANRSQEGRQESRSDKAKRLFRHYTVGSYDSFDAPSLIDGIDSGSDYIIKEKTVLLQKKDSEGFGFVLRGAKAQTPIEEFTPTPAFPALQYLESVDEGGVAWRAGLRMGDFLIEVNGQNVVKVGHRQVVNMIRQGGNTLMVKVVMVTRHPDMDEAVHKKASQQAKRLPPPAISLRSKSMTSELEEMVSPWKKKIEYEQQPAAVPSMEKKRTVYQMALNKLDEILAAAQQTISASESPGPGGLASLGKHRPKGFFATESSFDPHHRSQPSYDRPSFLPPGPGLMLRQKSIGAAEDDRPYLAPPAMKFSRSLSVPGSEDIPPPPTTSPPEPPYSTPPAPSSSGRLTPSPRGGPFNPGSGGPLPASSPSSFDGPSPPDPRSGGREKSLYHSGALPPAHHHPPHHHHHHAPPPQPHHHHAHPPHPPEMETGGSPDDPPPRLALGPQPSLRGWRGGGPSPTSGAPSPSHHSSSGGSSGPAQAPALRYFQLPPRAASAAMYVPARSGRGRKGPLVKQTKVEGEPQKGSLPPASSPTSPALPRSEPPPAGPSEKNSIPIPTIIIKAPSTSSSGRSSQGSSTEAEPPTQPDGAGGGGSSPSPAPATSPVPPSPSPVPTPASPSGPATLDFTSQFGAALVGAARREGGWQNEARRRSTLFLSTDAGDEDGGDSGLGPGAPPGPRLRHSKSIDEGMFSAEPYLRLESGGSSGGYGAYAAGSRAYGGSGSSSAFTSFLPPRPLVHPLTGKALDPASPLGLALAARERALKESSEGGVTPQPPPRPPSPRYDAPPPTLHHHSPHSPHSPHARHEPVLRLWGDPARRELGYRAGLGSQEKALTASPPAARRSLLHRLPPTAPGVGPLLLQLGPEPPTPHPGVSKAWRTAAPEEPERLPLHVRFLENCQARPPPAGTRGSSTEDGPGVPPPSPRRVLPTSPTSPRGNEENGLPLLVLPPPAPSVDVDDGEFLFAEPLPPPLEFSNSFEKPESPLTPGPPHPLPDPPSPATPLPAAPPPAVAAAPPTLDSTASSLTSYDSEVATLTQGAPAAPGDPPAPGPPAPAAPAPPAPQPGPDPPPGTDSGIEEVDSRSSSDHPLETISSASTLSSLSAEGGGNTGGVAGGGAGVASGTELLDTYVAYLDGQAFGGSGTPGPPYPPQLMTPSKLRGRALGTSGNLRPGPSGGLRDPVTPTSPTVSVTGAGTDGLLALSACSGPSTAGVAGGPVAVEPEVPPVPLPTASSLPRKLLPWEEGPGPPPPPLPGPLSQPQASALATVKASIISELSSKLQQFGGASTAGGALPWARGGSGGSTDSHHGGASYIPERTSSLQRQRLSEDSQTSLLSKPSSSIFQNWPKPPLPPLPTGSGVSSSTAAAPGATSPSASSASASTRHLQGVEFEMRPPLLRRAPSPSLLPASDHKVSPAPRPSSLPILPSGPLYPGLFDIRSSPTGGAGGSADPFAPVFVPPHPGISGGLGGALSGASRSLSPTRLLSLPPDKPFGAKPLGFWTKFDVADWLEWLGLSEHRAQFLDHEIDGSHLPALTKEDYVDLGVTRVGHRMNIDRALKFFLER</sequence>
<proteinExistence type="evidence at protein level"/>
<protein>
    <recommendedName>
        <fullName>SH3 and multiple ankyrin repeat domains protein 1</fullName>
        <shortName>Shank1</shortName>
    </recommendedName>
</protein>
<comment type="function">
    <text evidence="1">Seems to be an adapter protein in the postsynaptic density (PSD) of excitatory synapses that interconnects receptors of the postsynaptic membrane including NMDA-type and metabotropic glutamate receptors, and the actin-based cytoskeleton. Plays a role in the structural and functional organization of the dendritic spine and synaptic junction. Overexpression promotes maturation of dendritic spines and the enlargement of spine heads via its ability to recruit Homer to postsynaptic sites, and enhances presynaptic function (By similarity).</text>
</comment>
<comment type="subunit">
    <text evidence="1 2">May homomultimerize via its SAM domain. Interacts with the C-terminus of SSTR2 via the PDZ domain. Interacts with SHARPIN, SPTAN1, HOMER1 and DLGAP1/GKAP. Part of a complex with DLG4/PSD-95 and DLGAP1/GKAP. Interacts with BAIAP2. Interacts with IGSF9 (By similarity). Interacts with HOMER1 and HOMER3 (By similarity).</text>
</comment>
<comment type="interaction">
    <interactant intactId="EBI-2314988">
        <id>D3YZU1</id>
    </interactant>
    <interactant intactId="EBI-2794106">
        <id>Q61625</id>
        <label>Grid2</label>
    </interactant>
    <organismsDiffer>false</organismsDiffer>
    <experiments>3</experiments>
</comment>
<comment type="interaction">
    <interactant intactId="EBI-2314988">
        <id>D3YZU1</id>
    </interactant>
    <interactant intactId="EBI-1202690">
        <id>Q9EP53</id>
        <label>Tsc1</label>
    </interactant>
    <organismsDiffer>false</organismsDiffer>
    <experiments>2</experiments>
</comment>
<comment type="subcellular location">
    <subcellularLocation>
        <location evidence="1">Cytoplasm</location>
    </subcellularLocation>
    <subcellularLocation>
        <location evidence="1">Synapse</location>
    </subcellularLocation>
    <subcellularLocation>
        <location evidence="1">Postsynaptic density</location>
    </subcellularLocation>
    <text evidence="1">Colocalizes with alpha-latrotoxin receptor 1.</text>
</comment>
<comment type="tissue specificity">
    <text evidence="7">In brain, highly expressed in cortex, hippocampus and cerebellum.</text>
</comment>
<comment type="similarity">
    <text evidence="8">Belongs to the SHANK family.</text>
</comment>
<accession>D3YZU1</accession>
<reference key="1">
    <citation type="journal article" date="2009" name="PLoS Biol.">
        <title>Lineage-specific biology revealed by a finished genome assembly of the mouse.</title>
        <authorList>
            <person name="Church D.M."/>
            <person name="Goodstadt L."/>
            <person name="Hillier L.W."/>
            <person name="Zody M.C."/>
            <person name="Goldstein S."/>
            <person name="She X."/>
            <person name="Bult C.J."/>
            <person name="Agarwala R."/>
            <person name="Cherry J.L."/>
            <person name="DiCuccio M."/>
            <person name="Hlavina W."/>
            <person name="Kapustin Y."/>
            <person name="Meric P."/>
            <person name="Maglott D."/>
            <person name="Birtle Z."/>
            <person name="Marques A.C."/>
            <person name="Graves T."/>
            <person name="Zhou S."/>
            <person name="Teague B."/>
            <person name="Potamousis K."/>
            <person name="Churas C."/>
            <person name="Place M."/>
            <person name="Herschleb J."/>
            <person name="Runnheim R."/>
            <person name="Forrest D."/>
            <person name="Amos-Landgraf J."/>
            <person name="Schwartz D.C."/>
            <person name="Cheng Z."/>
            <person name="Lindblad-Toh K."/>
            <person name="Eichler E.E."/>
            <person name="Ponting C.P."/>
        </authorList>
    </citation>
    <scope>NUCLEOTIDE SEQUENCE [LARGE SCALE GENOMIC DNA]</scope>
    <source>
        <strain>C57BL/6J</strain>
    </source>
</reference>
<reference key="2">
    <citation type="journal article" date="2004" name="Mol. Cell. Neurosci.">
        <title>Identification and developmental analysis of genes expressed by dopaminergic neurons of the substantia nigra pars compacta.</title>
        <authorList>
            <person name="Thuret S."/>
            <person name="Bhatt L."/>
            <person name="O'Leary D.D."/>
            <person name="Simon H.H."/>
        </authorList>
    </citation>
    <scope>NUCLEOTIDE SEQUENCE [LARGE SCALE MRNA] OF 854-939</scope>
</reference>
<reference key="3">
    <citation type="journal article" date="2006" name="Mol. Cell. Proteomics">
        <title>Comprehensive identification of phosphorylation sites in postsynaptic density preparations.</title>
        <authorList>
            <person name="Trinidad J.C."/>
            <person name="Specht C.G."/>
            <person name="Thalhammer A."/>
            <person name="Schoepfer R."/>
            <person name="Burlingame A.L."/>
        </authorList>
    </citation>
    <scope>IDENTIFICATION BY MASS SPECTROMETRY [LARGE SCALE ANALYSIS]</scope>
    <source>
        <tissue>Brain</tissue>
    </source>
</reference>
<reference key="4">
    <citation type="journal article" date="2008" name="J. Proteome Res.">
        <title>Large-scale identification and evolution indexing of tyrosine phosphorylation sites from murine brain.</title>
        <authorList>
            <person name="Ballif B.A."/>
            <person name="Carey G.R."/>
            <person name="Sunyaev S.R."/>
            <person name="Gygi S.P."/>
        </authorList>
    </citation>
    <scope>PHOSPHORYLATION [LARGE SCALE ANALYSIS] AT TYR-186</scope>
    <scope>IDENTIFICATION BY MASS SPECTROMETRY [LARGE SCALE ANALYSIS]</scope>
    <source>
        <tissue>Brain</tissue>
    </source>
</reference>
<reference key="5">
    <citation type="journal article" date="2010" name="Cell">
        <title>A tissue-specific atlas of mouse protein phosphorylation and expression.</title>
        <authorList>
            <person name="Huttlin E.L."/>
            <person name="Jedrychowski M.P."/>
            <person name="Elias J.E."/>
            <person name="Goswami T."/>
            <person name="Rad R."/>
            <person name="Beausoleil S.A."/>
            <person name="Villen J."/>
            <person name="Haas W."/>
            <person name="Sowa M.E."/>
            <person name="Gygi S.P."/>
        </authorList>
    </citation>
    <scope>PHOSPHORYLATION [LARGE SCALE ANALYSIS] AT SER-540; SER-671; SER-791; SER-898 AND SER-1291</scope>
    <scope>IDENTIFICATION BY MASS SPECTROMETRY [LARGE SCALE ANALYSIS]</scope>
    <source>
        <tissue>Brain</tissue>
    </source>
</reference>
<reference key="6">
    <citation type="journal article" date="2011" name="Nature">
        <title>Shank3 mutant mice display autistic-like behaviours and striatal dysfunction.</title>
        <authorList>
            <person name="Peca J."/>
            <person name="Feliciano C."/>
            <person name="Ting J.T."/>
            <person name="Wang W."/>
            <person name="Wells M.F."/>
            <person name="Venkatraman T.N."/>
            <person name="Lascola C.D."/>
            <person name="Fu Z."/>
            <person name="Feng G."/>
        </authorList>
    </citation>
    <scope>TISSUE SPECIFICITY</scope>
</reference>
<reference key="7">
    <citation type="journal article" date="2014" name="Mol. Cell. Proteomics">
        <title>Immunoaffinity enrichment and mass spectrometry analysis of protein methylation.</title>
        <authorList>
            <person name="Guo A."/>
            <person name="Gu H."/>
            <person name="Zhou J."/>
            <person name="Mulhern D."/>
            <person name="Wang Y."/>
            <person name="Lee K.A."/>
            <person name="Yang V."/>
            <person name="Aguiar M."/>
            <person name="Kornhauser J."/>
            <person name="Jia X."/>
            <person name="Ren J."/>
            <person name="Beausoleil S.A."/>
            <person name="Silva J.C."/>
            <person name="Vemulapalli V."/>
            <person name="Bedford M.T."/>
            <person name="Comb M.J."/>
        </authorList>
    </citation>
    <scope>METHYLATION [LARGE SCALE ANALYSIS] AT ARG-43; ARG-544; ARG-958; ARG-1059; ARG-1098; ARG-1109; ARG-1257; ARG-1429; ARG-1901; ARG-2022; ARG-2042 AND ARG-2080</scope>
    <scope>IDENTIFICATION BY MASS SPECTROMETRY [LARGE SCALE ANALYSIS]</scope>
    <source>
        <tissue>Brain</tissue>
        <tissue>Embryo</tissue>
    </source>
</reference>
<organism>
    <name type="scientific">Mus musculus</name>
    <name type="common">Mouse</name>
    <dbReference type="NCBI Taxonomy" id="10090"/>
    <lineage>
        <taxon>Eukaryota</taxon>
        <taxon>Metazoa</taxon>
        <taxon>Chordata</taxon>
        <taxon>Craniata</taxon>
        <taxon>Vertebrata</taxon>
        <taxon>Euteleostomi</taxon>
        <taxon>Mammalia</taxon>
        <taxon>Eutheria</taxon>
        <taxon>Euarchontoglires</taxon>
        <taxon>Glires</taxon>
        <taxon>Rodentia</taxon>
        <taxon>Myomorpha</taxon>
        <taxon>Muroidea</taxon>
        <taxon>Muridae</taxon>
        <taxon>Murinae</taxon>
        <taxon>Mus</taxon>
        <taxon>Mus</taxon>
    </lineage>
</organism>
<feature type="chain" id="PRO_0000411019" description="SH3 and multiple ankyrin repeat domains protein 1">
    <location>
        <begin position="1"/>
        <end position="2167"/>
    </location>
</feature>
<feature type="repeat" description="ANK 1">
    <location>
        <begin position="212"/>
        <end position="242"/>
    </location>
</feature>
<feature type="repeat" description="ANK 2">
    <location>
        <begin position="246"/>
        <end position="275"/>
    </location>
</feature>
<feature type="repeat" description="ANK 3">
    <location>
        <begin position="279"/>
        <end position="309"/>
    </location>
</feature>
<feature type="repeat" description="ANK 4">
    <location>
        <begin position="313"/>
        <end position="342"/>
    </location>
</feature>
<feature type="repeat" description="ANK 5">
    <location>
        <begin position="346"/>
        <end position="375"/>
    </location>
</feature>
<feature type="repeat" description="ANK 6">
    <location>
        <begin position="379"/>
        <end position="407"/>
    </location>
</feature>
<feature type="domain" description="SH3" evidence="5">
    <location>
        <begin position="554"/>
        <end position="613"/>
    </location>
</feature>
<feature type="domain" description="PDZ" evidence="3">
    <location>
        <begin position="663"/>
        <end position="757"/>
    </location>
</feature>
<feature type="domain" description="SAM" evidence="4">
    <location>
        <begin position="2104"/>
        <end position="2167"/>
    </location>
</feature>
<feature type="region of interest" description="Disordered" evidence="6">
    <location>
        <begin position="1"/>
        <end position="63"/>
    </location>
</feature>
<feature type="region of interest" description="Disordered" evidence="6">
    <location>
        <begin position="413"/>
        <end position="432"/>
    </location>
</feature>
<feature type="region of interest" description="Disordered" evidence="6">
    <location>
        <begin position="454"/>
        <end position="546"/>
    </location>
</feature>
<feature type="region of interest" description="Disordered" evidence="6">
    <location>
        <begin position="841"/>
        <end position="894"/>
    </location>
</feature>
<feature type="region of interest" description="Disordered" evidence="6">
    <location>
        <begin position="917"/>
        <end position="1233"/>
    </location>
</feature>
<feature type="region of interest" description="Disordered" evidence="6">
    <location>
        <begin position="1245"/>
        <end position="1290"/>
    </location>
</feature>
<feature type="region of interest" description="Disordered" evidence="6">
    <location>
        <begin position="1308"/>
        <end position="1331"/>
    </location>
</feature>
<feature type="region of interest" description="Disordered" evidence="6">
    <location>
        <begin position="1361"/>
        <end position="1417"/>
    </location>
</feature>
<feature type="region of interest" description="Disordered" evidence="6">
    <location>
        <begin position="1429"/>
        <end position="1458"/>
    </location>
</feature>
<feature type="region of interest" description="Disordered" evidence="6">
    <location>
        <begin position="1500"/>
        <end position="1725"/>
    </location>
</feature>
<feature type="region of interest" description="Disordered" evidence="6">
    <location>
        <begin position="1740"/>
        <end position="1790"/>
    </location>
</feature>
<feature type="region of interest" description="Disordered" evidence="6">
    <location>
        <begin position="1828"/>
        <end position="1866"/>
    </location>
</feature>
<feature type="region of interest" description="Disordered" evidence="6">
    <location>
        <begin position="1898"/>
        <end position="1988"/>
    </location>
</feature>
<feature type="region of interest" description="Disordered" evidence="6">
    <location>
        <begin position="2002"/>
        <end position="2029"/>
    </location>
</feature>
<feature type="compositionally biased region" description="Low complexity" evidence="6">
    <location>
        <begin position="17"/>
        <end position="32"/>
    </location>
</feature>
<feature type="compositionally biased region" description="Gly residues" evidence="6">
    <location>
        <begin position="33"/>
        <end position="47"/>
    </location>
</feature>
<feature type="compositionally biased region" description="Low complexity" evidence="6">
    <location>
        <begin position="454"/>
        <end position="479"/>
    </location>
</feature>
<feature type="compositionally biased region" description="Gly residues" evidence="6">
    <location>
        <begin position="527"/>
        <end position="542"/>
    </location>
</feature>
<feature type="compositionally biased region" description="Pro residues" evidence="6">
    <location>
        <begin position="928"/>
        <end position="947"/>
    </location>
</feature>
<feature type="compositionally biased region" description="Low complexity" evidence="6">
    <location>
        <begin position="969"/>
        <end position="980"/>
    </location>
</feature>
<feature type="compositionally biased region" description="Basic residues" evidence="6">
    <location>
        <begin position="1004"/>
        <end position="1028"/>
    </location>
</feature>
<feature type="compositionally biased region" description="Low complexity" evidence="6">
    <location>
        <begin position="1064"/>
        <end position="1089"/>
    </location>
</feature>
<feature type="compositionally biased region" description="Low complexity" evidence="6">
    <location>
        <begin position="1132"/>
        <end position="1146"/>
    </location>
</feature>
<feature type="compositionally biased region" description="Low complexity" evidence="6">
    <location>
        <begin position="1171"/>
        <end position="1184"/>
    </location>
</feature>
<feature type="compositionally biased region" description="Pro residues" evidence="6">
    <location>
        <begin position="1203"/>
        <end position="1224"/>
    </location>
</feature>
<feature type="compositionally biased region" description="Basic and acidic residues" evidence="6">
    <location>
        <begin position="1245"/>
        <end position="1256"/>
    </location>
</feature>
<feature type="compositionally biased region" description="Basic and acidic residues" evidence="6">
    <location>
        <begin position="1363"/>
        <end position="1372"/>
    </location>
</feature>
<feature type="compositionally biased region" description="Pro residues" evidence="6">
    <location>
        <begin position="1378"/>
        <end position="1395"/>
    </location>
</feature>
<feature type="compositionally biased region" description="Basic residues" evidence="6">
    <location>
        <begin position="1396"/>
        <end position="1408"/>
    </location>
</feature>
<feature type="compositionally biased region" description="Low complexity" evidence="6">
    <location>
        <begin position="1530"/>
        <end position="1541"/>
    </location>
</feature>
<feature type="compositionally biased region" description="Pro residues" evidence="6">
    <location>
        <begin position="1589"/>
        <end position="1615"/>
    </location>
</feature>
<feature type="compositionally biased region" description="Polar residues" evidence="6">
    <location>
        <begin position="1624"/>
        <end position="1641"/>
    </location>
</feature>
<feature type="compositionally biased region" description="Pro residues" evidence="6">
    <location>
        <begin position="1648"/>
        <end position="1676"/>
    </location>
</feature>
<feature type="compositionally biased region" description="Basic and acidic residues" evidence="6">
    <location>
        <begin position="1684"/>
        <end position="1694"/>
    </location>
</feature>
<feature type="compositionally biased region" description="Low complexity" evidence="6">
    <location>
        <begin position="1695"/>
        <end position="1708"/>
    </location>
</feature>
<feature type="compositionally biased region" description="Gly residues" evidence="6">
    <location>
        <begin position="1709"/>
        <end position="1724"/>
    </location>
</feature>
<feature type="compositionally biased region" description="Pro residues" evidence="6">
    <location>
        <begin position="1850"/>
        <end position="1861"/>
    </location>
</feature>
<feature type="compositionally biased region" description="Low complexity" evidence="6">
    <location>
        <begin position="1934"/>
        <end position="1945"/>
    </location>
</feature>
<feature type="compositionally biased region" description="Low complexity" evidence="6">
    <location>
        <begin position="1960"/>
        <end position="1985"/>
    </location>
</feature>
<feature type="compositionally biased region" description="Low complexity" evidence="6">
    <location>
        <begin position="2002"/>
        <end position="2012"/>
    </location>
</feature>
<feature type="modified residue" description="Omega-N-methylarginine" evidence="11">
    <location>
        <position position="43"/>
    </location>
</feature>
<feature type="modified residue" description="Phosphotyrosine" evidence="9">
    <location>
        <position position="186"/>
    </location>
</feature>
<feature type="modified residue" description="Phosphoserine" evidence="10">
    <location>
        <position position="540"/>
    </location>
</feature>
<feature type="modified residue" description="Omega-N-methylarginine" evidence="11">
    <location>
        <position position="544"/>
    </location>
</feature>
<feature type="modified residue" description="Phosphoserine" evidence="10">
    <location>
        <position position="671"/>
    </location>
</feature>
<feature type="modified residue" description="Phosphoserine" evidence="10">
    <location>
        <position position="791"/>
    </location>
</feature>
<feature type="modified residue" description="Phosphoserine" evidence="10">
    <location>
        <position position="898"/>
    </location>
</feature>
<feature type="modified residue" description="Omega-N-methylarginine" evidence="11">
    <location>
        <position position="958"/>
    </location>
</feature>
<feature type="modified residue" description="Omega-N-methylarginine" evidence="11">
    <location>
        <position position="1059"/>
    </location>
</feature>
<feature type="modified residue" description="Omega-N-methylarginine" evidence="11">
    <location>
        <position position="1098"/>
    </location>
</feature>
<feature type="modified residue" description="Omega-N-methylarginine" evidence="11">
    <location>
        <position position="1109"/>
    </location>
</feature>
<feature type="modified residue" description="Asymmetric dimethylarginine" evidence="11">
    <location>
        <position position="1257"/>
    </location>
</feature>
<feature type="modified residue" description="Phosphoserine" evidence="10">
    <location>
        <position position="1291"/>
    </location>
</feature>
<feature type="modified residue" description="Omega-N-methylarginine" evidence="11">
    <location>
        <position position="1429"/>
    </location>
</feature>
<feature type="modified residue" description="Phosphoserine" evidence="2">
    <location>
        <position position="1442"/>
    </location>
</feature>
<feature type="modified residue" description="Omega-N-methylarginine" evidence="11">
    <location>
        <position position="1901"/>
    </location>
</feature>
<feature type="modified residue" description="Omega-N-methylarginine" evidence="11">
    <location>
        <position position="2022"/>
    </location>
</feature>
<feature type="modified residue" description="Omega-N-methylarginine" evidence="11">
    <location>
        <position position="2042"/>
    </location>
</feature>
<feature type="modified residue" description="Omega-N-methylarginine" evidence="11">
    <location>
        <position position="2080"/>
    </location>
</feature>
<feature type="sequence conflict" description="In Ref. 2; CO436178." evidence="8" ref="2">
    <original>P</original>
    <variation>R</variation>
    <location>
        <position position="939"/>
    </location>
</feature>
<keyword id="KW-0040">ANK repeat</keyword>
<keyword id="KW-0963">Cytoplasm</keyword>
<keyword id="KW-0221">Differentiation</keyword>
<keyword id="KW-0488">Methylation</keyword>
<keyword id="KW-0524">Neurogenesis</keyword>
<keyword id="KW-0597">Phosphoprotein</keyword>
<keyword id="KW-1185">Reference proteome</keyword>
<keyword id="KW-0677">Repeat</keyword>
<keyword id="KW-0728">SH3 domain</keyword>
<keyword id="KW-0770">Synapse</keyword>
<gene>
    <name type="primary">Shank1</name>
</gene>
<evidence type="ECO:0000250" key="1"/>
<evidence type="ECO:0000250" key="2">
    <source>
        <dbReference type="UniProtKB" id="Q9WV48"/>
    </source>
</evidence>
<evidence type="ECO:0000255" key="3">
    <source>
        <dbReference type="PROSITE-ProRule" id="PRU00143"/>
    </source>
</evidence>
<evidence type="ECO:0000255" key="4">
    <source>
        <dbReference type="PROSITE-ProRule" id="PRU00184"/>
    </source>
</evidence>
<evidence type="ECO:0000255" key="5">
    <source>
        <dbReference type="PROSITE-ProRule" id="PRU00192"/>
    </source>
</evidence>
<evidence type="ECO:0000256" key="6">
    <source>
        <dbReference type="SAM" id="MobiDB-lite"/>
    </source>
</evidence>
<evidence type="ECO:0000269" key="7">
    <source>
    </source>
</evidence>
<evidence type="ECO:0000305" key="8"/>
<evidence type="ECO:0007744" key="9">
    <source>
    </source>
</evidence>
<evidence type="ECO:0007744" key="10">
    <source>
    </source>
</evidence>
<evidence type="ECO:0007744" key="11">
    <source>
    </source>
</evidence>